<proteinExistence type="inferred from homology"/>
<keyword id="KW-0030">Aminoacyl-tRNA synthetase</keyword>
<keyword id="KW-0067">ATP-binding</keyword>
<keyword id="KW-0963">Cytoplasm</keyword>
<keyword id="KW-0436">Ligase</keyword>
<keyword id="KW-0460">Magnesium</keyword>
<keyword id="KW-0479">Metal-binding</keyword>
<keyword id="KW-0547">Nucleotide-binding</keyword>
<keyword id="KW-0648">Protein biosynthesis</keyword>
<accession>A7GHZ8</accession>
<organism>
    <name type="scientific">Clostridium botulinum (strain Langeland / NCTC 10281 / Type F)</name>
    <dbReference type="NCBI Taxonomy" id="441772"/>
    <lineage>
        <taxon>Bacteria</taxon>
        <taxon>Bacillati</taxon>
        <taxon>Bacillota</taxon>
        <taxon>Clostridia</taxon>
        <taxon>Eubacteriales</taxon>
        <taxon>Clostridiaceae</taxon>
        <taxon>Clostridium</taxon>
    </lineage>
</organism>
<gene>
    <name evidence="1" type="primary">pheS</name>
    <name type="ordered locus">CLI_3189</name>
</gene>
<reference key="1">
    <citation type="submission" date="2007-06" db="EMBL/GenBank/DDBJ databases">
        <authorList>
            <person name="Brinkac L.M."/>
            <person name="Daugherty S."/>
            <person name="Dodson R.J."/>
            <person name="Madupu R."/>
            <person name="Brown J.L."/>
            <person name="Bruce D."/>
            <person name="Detter C."/>
            <person name="Munk C."/>
            <person name="Smith L.A."/>
            <person name="Smith T.J."/>
            <person name="White O."/>
            <person name="Brettin T.S."/>
        </authorList>
    </citation>
    <scope>NUCLEOTIDE SEQUENCE [LARGE SCALE GENOMIC DNA]</scope>
    <source>
        <strain>Langeland / NCTC 10281 / Type F</strain>
    </source>
</reference>
<feature type="chain" id="PRO_1000006816" description="Phenylalanine--tRNA ligase alpha subunit">
    <location>
        <begin position="1"/>
        <end position="339"/>
    </location>
</feature>
<feature type="binding site" evidence="1">
    <location>
        <position position="254"/>
    </location>
    <ligand>
        <name>Mg(2+)</name>
        <dbReference type="ChEBI" id="CHEBI:18420"/>
        <note>shared with beta subunit</note>
    </ligand>
</feature>
<dbReference type="EC" id="6.1.1.20" evidence="1"/>
<dbReference type="EMBL" id="CP000728">
    <property type="protein sequence ID" value="ABS39299.1"/>
    <property type="molecule type" value="Genomic_DNA"/>
</dbReference>
<dbReference type="RefSeq" id="WP_012100836.1">
    <property type="nucleotide sequence ID" value="NC_009699.1"/>
</dbReference>
<dbReference type="SMR" id="A7GHZ8"/>
<dbReference type="KEGG" id="cbf:CLI_3189"/>
<dbReference type="HOGENOM" id="CLU_025086_0_1_9"/>
<dbReference type="Proteomes" id="UP000002410">
    <property type="component" value="Chromosome"/>
</dbReference>
<dbReference type="GO" id="GO:0005737">
    <property type="term" value="C:cytoplasm"/>
    <property type="evidence" value="ECO:0007669"/>
    <property type="project" value="UniProtKB-SubCell"/>
</dbReference>
<dbReference type="GO" id="GO:0005524">
    <property type="term" value="F:ATP binding"/>
    <property type="evidence" value="ECO:0007669"/>
    <property type="project" value="UniProtKB-UniRule"/>
</dbReference>
<dbReference type="GO" id="GO:0140096">
    <property type="term" value="F:catalytic activity, acting on a protein"/>
    <property type="evidence" value="ECO:0007669"/>
    <property type="project" value="UniProtKB-ARBA"/>
</dbReference>
<dbReference type="GO" id="GO:0000287">
    <property type="term" value="F:magnesium ion binding"/>
    <property type="evidence" value="ECO:0007669"/>
    <property type="project" value="UniProtKB-UniRule"/>
</dbReference>
<dbReference type="GO" id="GO:0004826">
    <property type="term" value="F:phenylalanine-tRNA ligase activity"/>
    <property type="evidence" value="ECO:0007669"/>
    <property type="project" value="UniProtKB-UniRule"/>
</dbReference>
<dbReference type="GO" id="GO:0016740">
    <property type="term" value="F:transferase activity"/>
    <property type="evidence" value="ECO:0007669"/>
    <property type="project" value="UniProtKB-ARBA"/>
</dbReference>
<dbReference type="GO" id="GO:0000049">
    <property type="term" value="F:tRNA binding"/>
    <property type="evidence" value="ECO:0007669"/>
    <property type="project" value="InterPro"/>
</dbReference>
<dbReference type="GO" id="GO:0006432">
    <property type="term" value="P:phenylalanyl-tRNA aminoacylation"/>
    <property type="evidence" value="ECO:0007669"/>
    <property type="project" value="UniProtKB-UniRule"/>
</dbReference>
<dbReference type="CDD" id="cd00496">
    <property type="entry name" value="PheRS_alpha_core"/>
    <property type="match status" value="1"/>
</dbReference>
<dbReference type="FunFam" id="3.30.930.10:FF:000003">
    <property type="entry name" value="Phenylalanine--tRNA ligase alpha subunit"/>
    <property type="match status" value="1"/>
</dbReference>
<dbReference type="Gene3D" id="3.30.930.10">
    <property type="entry name" value="Bira Bifunctional Protein, Domain 2"/>
    <property type="match status" value="1"/>
</dbReference>
<dbReference type="HAMAP" id="MF_00281">
    <property type="entry name" value="Phe_tRNA_synth_alpha1"/>
    <property type="match status" value="1"/>
</dbReference>
<dbReference type="InterPro" id="IPR006195">
    <property type="entry name" value="aa-tRNA-synth_II"/>
</dbReference>
<dbReference type="InterPro" id="IPR045864">
    <property type="entry name" value="aa-tRNA-synth_II/BPL/LPL"/>
</dbReference>
<dbReference type="InterPro" id="IPR004529">
    <property type="entry name" value="Phe-tRNA-synth_IIc_asu"/>
</dbReference>
<dbReference type="InterPro" id="IPR004188">
    <property type="entry name" value="Phe-tRNA_ligase_II_N"/>
</dbReference>
<dbReference type="InterPro" id="IPR022911">
    <property type="entry name" value="Phe_tRNA_ligase_alpha1_bac"/>
</dbReference>
<dbReference type="InterPro" id="IPR002319">
    <property type="entry name" value="Phenylalanyl-tRNA_Synthase"/>
</dbReference>
<dbReference type="InterPro" id="IPR010978">
    <property type="entry name" value="tRNA-bd_arm"/>
</dbReference>
<dbReference type="NCBIfam" id="TIGR00468">
    <property type="entry name" value="pheS"/>
    <property type="match status" value="1"/>
</dbReference>
<dbReference type="PANTHER" id="PTHR11538:SF41">
    <property type="entry name" value="PHENYLALANINE--TRNA LIGASE, MITOCHONDRIAL"/>
    <property type="match status" value="1"/>
</dbReference>
<dbReference type="PANTHER" id="PTHR11538">
    <property type="entry name" value="PHENYLALANYL-TRNA SYNTHETASE"/>
    <property type="match status" value="1"/>
</dbReference>
<dbReference type="Pfam" id="PF02912">
    <property type="entry name" value="Phe_tRNA-synt_N"/>
    <property type="match status" value="1"/>
</dbReference>
<dbReference type="Pfam" id="PF01409">
    <property type="entry name" value="tRNA-synt_2d"/>
    <property type="match status" value="1"/>
</dbReference>
<dbReference type="SUPFAM" id="SSF55681">
    <property type="entry name" value="Class II aaRS and biotin synthetases"/>
    <property type="match status" value="1"/>
</dbReference>
<dbReference type="SUPFAM" id="SSF46589">
    <property type="entry name" value="tRNA-binding arm"/>
    <property type="match status" value="1"/>
</dbReference>
<dbReference type="PROSITE" id="PS50862">
    <property type="entry name" value="AA_TRNA_LIGASE_II"/>
    <property type="match status" value="1"/>
</dbReference>
<name>SYFA_CLOBL</name>
<comment type="catalytic activity">
    <reaction evidence="1">
        <text>tRNA(Phe) + L-phenylalanine + ATP = L-phenylalanyl-tRNA(Phe) + AMP + diphosphate + H(+)</text>
        <dbReference type="Rhea" id="RHEA:19413"/>
        <dbReference type="Rhea" id="RHEA-COMP:9668"/>
        <dbReference type="Rhea" id="RHEA-COMP:9699"/>
        <dbReference type="ChEBI" id="CHEBI:15378"/>
        <dbReference type="ChEBI" id="CHEBI:30616"/>
        <dbReference type="ChEBI" id="CHEBI:33019"/>
        <dbReference type="ChEBI" id="CHEBI:58095"/>
        <dbReference type="ChEBI" id="CHEBI:78442"/>
        <dbReference type="ChEBI" id="CHEBI:78531"/>
        <dbReference type="ChEBI" id="CHEBI:456215"/>
        <dbReference type="EC" id="6.1.1.20"/>
    </reaction>
</comment>
<comment type="cofactor">
    <cofactor evidence="1">
        <name>Mg(2+)</name>
        <dbReference type="ChEBI" id="CHEBI:18420"/>
    </cofactor>
    <text evidence="1">Binds 2 magnesium ions per tetramer.</text>
</comment>
<comment type="subunit">
    <text evidence="1">Tetramer of two alpha and two beta subunits.</text>
</comment>
<comment type="subcellular location">
    <subcellularLocation>
        <location evidence="1">Cytoplasm</location>
    </subcellularLocation>
</comment>
<comment type="similarity">
    <text evidence="1">Belongs to the class-II aminoacyl-tRNA synthetase family. Phe-tRNA synthetase alpha subunit type 1 subfamily.</text>
</comment>
<protein>
    <recommendedName>
        <fullName evidence="1">Phenylalanine--tRNA ligase alpha subunit</fullName>
        <ecNumber evidence="1">6.1.1.20</ecNumber>
    </recommendedName>
    <alternativeName>
        <fullName evidence="1">Phenylalanyl-tRNA synthetase alpha subunit</fullName>
        <shortName evidence="1">PheRS</shortName>
    </alternativeName>
</protein>
<evidence type="ECO:0000255" key="1">
    <source>
        <dbReference type="HAMAP-Rule" id="MF_00281"/>
    </source>
</evidence>
<sequence length="339" mass="38584">MRQKLEEIKNSAINELKTTLSKDQLEAIRVKYLGKKGELTQILRGMGALSQEERPIVGKVANEVRSYIEETIKEAFSDIKNKEKSIRLENETIDITMPGKKQAVGKRHPLDLTLESMKDIFISMGFTIEEGPEVELDKYNFEALNIPKNHPARGEQDTFYINDNLVLRTQTSPIQIRTMENQKPPIKMIAPGKVYRSDSVDATHSPIFYQMEGLVVDKGITFSDLKGTLELFAKRMFGNKVKTKFRPHHFPFTEPSAEMDATCFVCNGEGCKVCKGSGWIELLGCGMVHPQVLRNCNIDPEVYSGFAFGFGVDRMVMMKYGIDDIRLLYESDMRFLNQF</sequence>